<organism>
    <name type="scientific">Burkholderia lata (strain ATCC 17760 / DSM 23089 / LMG 22485 / NCIMB 9086 / R18194 / 383)</name>
    <dbReference type="NCBI Taxonomy" id="482957"/>
    <lineage>
        <taxon>Bacteria</taxon>
        <taxon>Pseudomonadati</taxon>
        <taxon>Pseudomonadota</taxon>
        <taxon>Betaproteobacteria</taxon>
        <taxon>Burkholderiales</taxon>
        <taxon>Burkholderiaceae</taxon>
        <taxon>Burkholderia</taxon>
        <taxon>Burkholderia cepacia complex</taxon>
    </lineage>
</organism>
<proteinExistence type="inferred from homology"/>
<dbReference type="EMBL" id="CP000151">
    <property type="protein sequence ID" value="ABB07137.1"/>
    <property type="molecule type" value="Genomic_DNA"/>
</dbReference>
<dbReference type="RefSeq" id="WP_011350737.1">
    <property type="nucleotide sequence ID" value="NC_007510.1"/>
</dbReference>
<dbReference type="SMR" id="Q39K79"/>
<dbReference type="GeneID" id="45093450"/>
<dbReference type="KEGG" id="bur:Bcep18194_A3535"/>
<dbReference type="PATRIC" id="fig|482957.22.peg.380"/>
<dbReference type="HOGENOM" id="CLU_086034_1_1_4"/>
<dbReference type="Proteomes" id="UP000002705">
    <property type="component" value="Chromosome 1"/>
</dbReference>
<dbReference type="GO" id="GO:0033281">
    <property type="term" value="C:TAT protein transport complex"/>
    <property type="evidence" value="ECO:0007669"/>
    <property type="project" value="UniProtKB-UniRule"/>
</dbReference>
<dbReference type="GO" id="GO:0008320">
    <property type="term" value="F:protein transmembrane transporter activity"/>
    <property type="evidence" value="ECO:0007669"/>
    <property type="project" value="UniProtKB-UniRule"/>
</dbReference>
<dbReference type="GO" id="GO:0043953">
    <property type="term" value="P:protein transport by the Tat complex"/>
    <property type="evidence" value="ECO:0007669"/>
    <property type="project" value="UniProtKB-UniRule"/>
</dbReference>
<dbReference type="Gene3D" id="1.20.5.3310">
    <property type="match status" value="1"/>
</dbReference>
<dbReference type="HAMAP" id="MF_00237">
    <property type="entry name" value="TatB"/>
    <property type="match status" value="1"/>
</dbReference>
<dbReference type="InterPro" id="IPR003369">
    <property type="entry name" value="TatA/B/E"/>
</dbReference>
<dbReference type="InterPro" id="IPR018448">
    <property type="entry name" value="TatB"/>
</dbReference>
<dbReference type="NCBIfam" id="TIGR01410">
    <property type="entry name" value="tatB"/>
    <property type="match status" value="1"/>
</dbReference>
<dbReference type="PANTHER" id="PTHR33162">
    <property type="entry name" value="SEC-INDEPENDENT PROTEIN TRANSLOCASE PROTEIN TATA, CHLOROPLASTIC"/>
    <property type="match status" value="1"/>
</dbReference>
<dbReference type="PANTHER" id="PTHR33162:SF1">
    <property type="entry name" value="SEC-INDEPENDENT PROTEIN TRANSLOCASE PROTEIN TATA, CHLOROPLASTIC"/>
    <property type="match status" value="1"/>
</dbReference>
<dbReference type="Pfam" id="PF02416">
    <property type="entry name" value="TatA_B_E"/>
    <property type="match status" value="1"/>
</dbReference>
<dbReference type="PRINTS" id="PR01506">
    <property type="entry name" value="TATBPROTEIN"/>
</dbReference>
<name>TATB_BURL3</name>
<comment type="function">
    <text evidence="1">Part of the twin-arginine translocation (Tat) system that transports large folded proteins containing a characteristic twin-arginine motif in their signal peptide across membranes. Together with TatC, TatB is part of a receptor directly interacting with Tat signal peptides. TatB may form an oligomeric binding site that transiently accommodates folded Tat precursor proteins before their translocation.</text>
</comment>
<comment type="subunit">
    <text evidence="1">The Tat system comprises two distinct complexes: a TatABC complex, containing multiple copies of TatA, TatB and TatC subunits, and a separate TatA complex, containing only TatA subunits. Substrates initially bind to the TatABC complex, which probably triggers association of the separate TatA complex to form the active translocon.</text>
</comment>
<comment type="subcellular location">
    <subcellularLocation>
        <location evidence="1">Cell inner membrane</location>
        <topology evidence="1">Single-pass membrane protein</topology>
    </subcellularLocation>
</comment>
<comment type="similarity">
    <text evidence="1">Belongs to the TatB family.</text>
</comment>
<sequence length="175" mass="19223">MLDLGLSKMALIGVVALVVLGPERLPRVARTAGALFGRAQRYINDVKAEVSREIELDALRTMKTDFESAARNVETTIHDNLREHEKELNDTWHSAVGGLNEAAGDAGSTGSDTAAPSWRGSTAALAPKRRNWRVKQAAAPAWYKRATTRRTHVQSGAARVARHQPASLRRPTRFF</sequence>
<gene>
    <name evidence="1" type="primary">tatB</name>
    <name type="ordered locus">Bcep18194_A3535</name>
</gene>
<feature type="chain" id="PRO_0000301156" description="Sec-independent protein translocase protein TatB">
    <location>
        <begin position="1"/>
        <end position="175"/>
    </location>
</feature>
<feature type="transmembrane region" description="Helical" evidence="1">
    <location>
        <begin position="1"/>
        <end position="21"/>
    </location>
</feature>
<feature type="region of interest" description="Disordered" evidence="2">
    <location>
        <begin position="155"/>
        <end position="175"/>
    </location>
</feature>
<protein>
    <recommendedName>
        <fullName evidence="1">Sec-independent protein translocase protein TatB</fullName>
    </recommendedName>
</protein>
<evidence type="ECO:0000255" key="1">
    <source>
        <dbReference type="HAMAP-Rule" id="MF_00237"/>
    </source>
</evidence>
<evidence type="ECO:0000256" key="2">
    <source>
        <dbReference type="SAM" id="MobiDB-lite"/>
    </source>
</evidence>
<accession>Q39K79</accession>
<keyword id="KW-0997">Cell inner membrane</keyword>
<keyword id="KW-1003">Cell membrane</keyword>
<keyword id="KW-0472">Membrane</keyword>
<keyword id="KW-0653">Protein transport</keyword>
<keyword id="KW-0811">Translocation</keyword>
<keyword id="KW-0812">Transmembrane</keyword>
<keyword id="KW-1133">Transmembrane helix</keyword>
<keyword id="KW-0813">Transport</keyword>
<reference key="1">
    <citation type="submission" date="2005-10" db="EMBL/GenBank/DDBJ databases">
        <title>Complete sequence of chromosome 1 of Burkholderia sp. 383.</title>
        <authorList>
            <consortium name="US DOE Joint Genome Institute"/>
            <person name="Copeland A."/>
            <person name="Lucas S."/>
            <person name="Lapidus A."/>
            <person name="Barry K."/>
            <person name="Detter J.C."/>
            <person name="Glavina T."/>
            <person name="Hammon N."/>
            <person name="Israni S."/>
            <person name="Pitluck S."/>
            <person name="Chain P."/>
            <person name="Malfatti S."/>
            <person name="Shin M."/>
            <person name="Vergez L."/>
            <person name="Schmutz J."/>
            <person name="Larimer F."/>
            <person name="Land M."/>
            <person name="Kyrpides N."/>
            <person name="Lykidis A."/>
            <person name="Richardson P."/>
        </authorList>
    </citation>
    <scope>NUCLEOTIDE SEQUENCE [LARGE SCALE GENOMIC DNA]</scope>
    <source>
        <strain>ATCC 17760 / DSM 23089 / LMG 22485 / NCIMB 9086 / R18194 / 383</strain>
    </source>
</reference>